<accession>A5WBW1</accession>
<keyword id="KW-0066">ATP synthesis</keyword>
<keyword id="KW-0067">ATP-binding</keyword>
<keyword id="KW-0997">Cell inner membrane</keyword>
<keyword id="KW-1003">Cell membrane</keyword>
<keyword id="KW-0139">CF(1)</keyword>
<keyword id="KW-0375">Hydrogen ion transport</keyword>
<keyword id="KW-0406">Ion transport</keyword>
<keyword id="KW-0472">Membrane</keyword>
<keyword id="KW-0547">Nucleotide-binding</keyword>
<keyword id="KW-1278">Translocase</keyword>
<keyword id="KW-0813">Transport</keyword>
<evidence type="ECO:0000255" key="1">
    <source>
        <dbReference type="HAMAP-Rule" id="MF_01347"/>
    </source>
</evidence>
<reference key="1">
    <citation type="submission" date="2007-05" db="EMBL/GenBank/DDBJ databases">
        <title>Complete sequence of chromosome of Psychrobacter sp. PRwf-1.</title>
        <authorList>
            <consortium name="US DOE Joint Genome Institute"/>
            <person name="Copeland A."/>
            <person name="Lucas S."/>
            <person name="Lapidus A."/>
            <person name="Barry K."/>
            <person name="Detter J.C."/>
            <person name="Glavina del Rio T."/>
            <person name="Hammon N."/>
            <person name="Israni S."/>
            <person name="Dalin E."/>
            <person name="Tice H."/>
            <person name="Pitluck S."/>
            <person name="Chain P."/>
            <person name="Malfatti S."/>
            <person name="Shin M."/>
            <person name="Vergez L."/>
            <person name="Schmutz J."/>
            <person name="Larimer F."/>
            <person name="Land M."/>
            <person name="Hauser L."/>
            <person name="Kyrpides N."/>
            <person name="Kim E."/>
            <person name="Tiedje J."/>
            <person name="Richardson P."/>
        </authorList>
    </citation>
    <scope>NUCLEOTIDE SEQUENCE [LARGE SCALE GENOMIC DNA]</scope>
    <source>
        <strain>PRwf-1</strain>
    </source>
</reference>
<comment type="function">
    <text evidence="1">Produces ATP from ADP in the presence of a proton gradient across the membrane. The catalytic sites are hosted primarily by the beta subunits.</text>
</comment>
<comment type="catalytic activity">
    <reaction evidence="1">
        <text>ATP + H2O + 4 H(+)(in) = ADP + phosphate + 5 H(+)(out)</text>
        <dbReference type="Rhea" id="RHEA:57720"/>
        <dbReference type="ChEBI" id="CHEBI:15377"/>
        <dbReference type="ChEBI" id="CHEBI:15378"/>
        <dbReference type="ChEBI" id="CHEBI:30616"/>
        <dbReference type="ChEBI" id="CHEBI:43474"/>
        <dbReference type="ChEBI" id="CHEBI:456216"/>
        <dbReference type="EC" id="7.1.2.2"/>
    </reaction>
</comment>
<comment type="subunit">
    <text evidence="1">F-type ATPases have 2 components, CF(1) - the catalytic core - and CF(0) - the membrane proton channel. CF(1) has five subunits: alpha(3), beta(3), gamma(1), delta(1), epsilon(1). CF(0) has three main subunits: a(1), b(2) and c(9-12). The alpha and beta chains form an alternating ring which encloses part of the gamma chain. CF(1) is attached to CF(0) by a central stalk formed by the gamma and epsilon chains, while a peripheral stalk is formed by the delta and b chains.</text>
</comment>
<comment type="subcellular location">
    <subcellularLocation>
        <location evidence="1">Cell inner membrane</location>
        <topology evidence="1">Peripheral membrane protein</topology>
    </subcellularLocation>
</comment>
<comment type="similarity">
    <text evidence="1">Belongs to the ATPase alpha/beta chains family.</text>
</comment>
<gene>
    <name evidence="1" type="primary">atpD</name>
    <name type="ordered locus">PsycPRwf_0193</name>
</gene>
<feature type="chain" id="PRO_1000073368" description="ATP synthase subunit beta">
    <location>
        <begin position="1"/>
        <end position="475"/>
    </location>
</feature>
<feature type="binding site" evidence="1">
    <location>
        <begin position="148"/>
        <end position="155"/>
    </location>
    <ligand>
        <name>ATP</name>
        <dbReference type="ChEBI" id="CHEBI:30616"/>
    </ligand>
</feature>
<proteinExistence type="inferred from homology"/>
<protein>
    <recommendedName>
        <fullName evidence="1">ATP synthase subunit beta</fullName>
        <ecNumber evidence="1">7.1.2.2</ecNumber>
    </recommendedName>
    <alternativeName>
        <fullName evidence="1">ATP synthase F1 sector subunit beta</fullName>
    </alternativeName>
    <alternativeName>
        <fullName evidence="1">F-ATPase subunit beta</fullName>
    </alternativeName>
</protein>
<sequence length="475" mass="51661">MSSGRIVQIIGAVIDVEFNRTDVPQVYDALVVDGTDTTLEVQQQLGDGVVRTIAMGSTEGLKRGLPVTNTGAPITVPVGEATLGRIMDVLGRPIDEQGPVNSEDKWSIHRQAPSYDEQANSTDLLETGIKVIDLLCPFAKGGKVGLFGGAGVGKTVNMMELINNIALKHSGLSVFAGVGERTREGNDFYHEMQEAGVVDVENFTNSKVAMVYGQMNEPPGNRLRVALTGLTMAEYFRDQKDENGKGKDVLLFVDNIYRYTLAGTEVSALLGRMPSAVGYQPTLAEEMGVLQERITSTQTGSITSIQAVYVPADDLTDPSPATTFAHLDATVVLSRDIASQGIYPAIDPLDSTSRQLDPLVIGEEHYNVARGVQEVLQRYKELKDIIAILGMDELSEDDKMVVYRARKIQRFLSQPFHVAEVFTGAPGKYVTLRETISSFRDILDGKYDNLPEQAFYMAGGIDEVVAKAEKMKSAA</sequence>
<organism>
    <name type="scientific">Psychrobacter sp. (strain PRwf-1)</name>
    <dbReference type="NCBI Taxonomy" id="349106"/>
    <lineage>
        <taxon>Bacteria</taxon>
        <taxon>Pseudomonadati</taxon>
        <taxon>Pseudomonadota</taxon>
        <taxon>Gammaproteobacteria</taxon>
        <taxon>Moraxellales</taxon>
        <taxon>Moraxellaceae</taxon>
        <taxon>Psychrobacter</taxon>
    </lineage>
</organism>
<name>ATPB_PSYWF</name>
<dbReference type="EC" id="7.1.2.2" evidence="1"/>
<dbReference type="EMBL" id="CP000713">
    <property type="protein sequence ID" value="ABQ93152.1"/>
    <property type="molecule type" value="Genomic_DNA"/>
</dbReference>
<dbReference type="SMR" id="A5WBW1"/>
<dbReference type="STRING" id="349106.PsycPRwf_0193"/>
<dbReference type="KEGG" id="prw:PsycPRwf_0193"/>
<dbReference type="eggNOG" id="COG0055">
    <property type="taxonomic scope" value="Bacteria"/>
</dbReference>
<dbReference type="HOGENOM" id="CLU_022398_0_2_6"/>
<dbReference type="GO" id="GO:0005886">
    <property type="term" value="C:plasma membrane"/>
    <property type="evidence" value="ECO:0007669"/>
    <property type="project" value="UniProtKB-SubCell"/>
</dbReference>
<dbReference type="GO" id="GO:0045259">
    <property type="term" value="C:proton-transporting ATP synthase complex"/>
    <property type="evidence" value="ECO:0007669"/>
    <property type="project" value="UniProtKB-KW"/>
</dbReference>
<dbReference type="GO" id="GO:0005524">
    <property type="term" value="F:ATP binding"/>
    <property type="evidence" value="ECO:0007669"/>
    <property type="project" value="UniProtKB-UniRule"/>
</dbReference>
<dbReference type="GO" id="GO:0016887">
    <property type="term" value="F:ATP hydrolysis activity"/>
    <property type="evidence" value="ECO:0007669"/>
    <property type="project" value="InterPro"/>
</dbReference>
<dbReference type="GO" id="GO:0046933">
    <property type="term" value="F:proton-transporting ATP synthase activity, rotational mechanism"/>
    <property type="evidence" value="ECO:0007669"/>
    <property type="project" value="UniProtKB-UniRule"/>
</dbReference>
<dbReference type="CDD" id="cd18110">
    <property type="entry name" value="ATP-synt_F1_beta_C"/>
    <property type="match status" value="1"/>
</dbReference>
<dbReference type="CDD" id="cd18115">
    <property type="entry name" value="ATP-synt_F1_beta_N"/>
    <property type="match status" value="1"/>
</dbReference>
<dbReference type="CDD" id="cd01133">
    <property type="entry name" value="F1-ATPase_beta_CD"/>
    <property type="match status" value="1"/>
</dbReference>
<dbReference type="FunFam" id="1.10.1140.10:FF:000001">
    <property type="entry name" value="ATP synthase subunit beta"/>
    <property type="match status" value="1"/>
</dbReference>
<dbReference type="FunFam" id="3.40.50.300:FF:000004">
    <property type="entry name" value="ATP synthase subunit beta"/>
    <property type="match status" value="1"/>
</dbReference>
<dbReference type="Gene3D" id="2.40.10.170">
    <property type="match status" value="1"/>
</dbReference>
<dbReference type="Gene3D" id="1.10.1140.10">
    <property type="entry name" value="Bovine Mitochondrial F1-atpase, Atp Synthase Beta Chain, Chain D, domain 3"/>
    <property type="match status" value="1"/>
</dbReference>
<dbReference type="Gene3D" id="3.40.50.300">
    <property type="entry name" value="P-loop containing nucleotide triphosphate hydrolases"/>
    <property type="match status" value="1"/>
</dbReference>
<dbReference type="HAMAP" id="MF_01347">
    <property type="entry name" value="ATP_synth_beta_bact"/>
    <property type="match status" value="1"/>
</dbReference>
<dbReference type="InterPro" id="IPR003593">
    <property type="entry name" value="AAA+_ATPase"/>
</dbReference>
<dbReference type="InterPro" id="IPR055190">
    <property type="entry name" value="ATP-synt_VA_C"/>
</dbReference>
<dbReference type="InterPro" id="IPR005722">
    <property type="entry name" value="ATP_synth_F1_bsu"/>
</dbReference>
<dbReference type="InterPro" id="IPR020003">
    <property type="entry name" value="ATPase_a/bsu_AS"/>
</dbReference>
<dbReference type="InterPro" id="IPR050053">
    <property type="entry name" value="ATPase_alpha/beta_chains"/>
</dbReference>
<dbReference type="InterPro" id="IPR004100">
    <property type="entry name" value="ATPase_F1/V1/A1_a/bsu_N"/>
</dbReference>
<dbReference type="InterPro" id="IPR036121">
    <property type="entry name" value="ATPase_F1/V1/A1_a/bsu_N_sf"/>
</dbReference>
<dbReference type="InterPro" id="IPR000194">
    <property type="entry name" value="ATPase_F1/V1/A1_a/bsu_nucl-bd"/>
</dbReference>
<dbReference type="InterPro" id="IPR024034">
    <property type="entry name" value="ATPase_F1/V1_b/a_C"/>
</dbReference>
<dbReference type="InterPro" id="IPR027417">
    <property type="entry name" value="P-loop_NTPase"/>
</dbReference>
<dbReference type="NCBIfam" id="TIGR01039">
    <property type="entry name" value="atpD"/>
    <property type="match status" value="1"/>
</dbReference>
<dbReference type="PANTHER" id="PTHR15184">
    <property type="entry name" value="ATP SYNTHASE"/>
    <property type="match status" value="1"/>
</dbReference>
<dbReference type="PANTHER" id="PTHR15184:SF71">
    <property type="entry name" value="ATP SYNTHASE SUBUNIT BETA, MITOCHONDRIAL"/>
    <property type="match status" value="1"/>
</dbReference>
<dbReference type="Pfam" id="PF00006">
    <property type="entry name" value="ATP-synt_ab"/>
    <property type="match status" value="1"/>
</dbReference>
<dbReference type="Pfam" id="PF02874">
    <property type="entry name" value="ATP-synt_ab_N"/>
    <property type="match status" value="1"/>
</dbReference>
<dbReference type="Pfam" id="PF22919">
    <property type="entry name" value="ATP-synt_VA_C"/>
    <property type="match status" value="1"/>
</dbReference>
<dbReference type="SMART" id="SM00382">
    <property type="entry name" value="AAA"/>
    <property type="match status" value="1"/>
</dbReference>
<dbReference type="SUPFAM" id="SSF47917">
    <property type="entry name" value="C-terminal domain of alpha and beta subunits of F1 ATP synthase"/>
    <property type="match status" value="1"/>
</dbReference>
<dbReference type="SUPFAM" id="SSF50615">
    <property type="entry name" value="N-terminal domain of alpha and beta subunits of F1 ATP synthase"/>
    <property type="match status" value="1"/>
</dbReference>
<dbReference type="SUPFAM" id="SSF52540">
    <property type="entry name" value="P-loop containing nucleoside triphosphate hydrolases"/>
    <property type="match status" value="1"/>
</dbReference>
<dbReference type="PROSITE" id="PS00152">
    <property type="entry name" value="ATPASE_ALPHA_BETA"/>
    <property type="match status" value="1"/>
</dbReference>